<name>HISZ_BURL3</name>
<keyword id="KW-0028">Amino-acid biosynthesis</keyword>
<keyword id="KW-0963">Cytoplasm</keyword>
<keyword id="KW-0368">Histidine biosynthesis</keyword>
<evidence type="ECO:0000255" key="1">
    <source>
        <dbReference type="HAMAP-Rule" id="MF_00125"/>
    </source>
</evidence>
<protein>
    <recommendedName>
        <fullName evidence="1">ATP phosphoribosyltransferase regulatory subunit</fullName>
    </recommendedName>
</protein>
<reference key="1">
    <citation type="submission" date="2005-10" db="EMBL/GenBank/DDBJ databases">
        <title>Complete sequence of chromosome 1 of Burkholderia sp. 383.</title>
        <authorList>
            <consortium name="US DOE Joint Genome Institute"/>
            <person name="Copeland A."/>
            <person name="Lucas S."/>
            <person name="Lapidus A."/>
            <person name="Barry K."/>
            <person name="Detter J.C."/>
            <person name="Glavina T."/>
            <person name="Hammon N."/>
            <person name="Israni S."/>
            <person name="Pitluck S."/>
            <person name="Chain P."/>
            <person name="Malfatti S."/>
            <person name="Shin M."/>
            <person name="Vergez L."/>
            <person name="Schmutz J."/>
            <person name="Larimer F."/>
            <person name="Land M."/>
            <person name="Kyrpides N."/>
            <person name="Lykidis A."/>
            <person name="Richardson P."/>
        </authorList>
    </citation>
    <scope>NUCLEOTIDE SEQUENCE [LARGE SCALE GENOMIC DNA]</scope>
    <source>
        <strain>ATCC 17760 / DSM 23089 / LMG 22485 / NCIMB 9086 / R18194 / 383</strain>
    </source>
</reference>
<gene>
    <name evidence="1" type="primary">hisZ</name>
    <name type="ordered locus">Bcep18194_A5103</name>
</gene>
<sequence>MSTWLLPENIADVLPSEARKIEELRRRLLDRFRSYGYEMVMPPLLEYLESLLTSGGADLRLRTFKLVDQLSGRTLGLRADITPQVARIDAHLLNRQGVTRLCYAGHVMHTRPRGLHATREQIQIGAEIYGHAGLEADLEIQQLMLDALHLAGLSRIRLDLGHAGVLAALLARDAQAAERGESLYDALSGKDVPLLNELTDDLGADTRAALRALPHLYGDASVLAEARTRLPVLPEITRALDDLAQLAAQAKGAEVAIDLGDLRGYAYHSGAMFSAYIDGVPNAIARGGRYDHVGQAYGRARPATGFSLDLRELARISPVEARGTAILAPWAQDDALSAAVAALRDAGEVVIQALPGHDHVLDEFACDRSLVERNGAWVVEPR</sequence>
<feature type="chain" id="PRO_0000242829" description="ATP phosphoribosyltransferase regulatory subunit">
    <location>
        <begin position="1"/>
        <end position="382"/>
    </location>
</feature>
<comment type="function">
    <text evidence="1">Required for the first step of histidine biosynthesis. May allow the feedback regulation of ATP phosphoribosyltransferase activity by histidine.</text>
</comment>
<comment type="pathway">
    <text evidence="1">Amino-acid biosynthesis; L-histidine biosynthesis; L-histidine from 5-phospho-alpha-D-ribose 1-diphosphate: step 1/9.</text>
</comment>
<comment type="subunit">
    <text evidence="1">Heteromultimer composed of HisG and HisZ subunits.</text>
</comment>
<comment type="subcellular location">
    <subcellularLocation>
        <location evidence="1">Cytoplasm</location>
    </subcellularLocation>
</comment>
<comment type="miscellaneous">
    <text>This function is generally fulfilled by the C-terminal part of HisG, which is missing in some bacteria such as this one.</text>
</comment>
<comment type="similarity">
    <text evidence="1">Belongs to the class-II aminoacyl-tRNA synthetase family. HisZ subfamily.</text>
</comment>
<accession>Q39FR9</accession>
<proteinExistence type="inferred from homology"/>
<organism>
    <name type="scientific">Burkholderia lata (strain ATCC 17760 / DSM 23089 / LMG 22485 / NCIMB 9086 / R18194 / 383)</name>
    <dbReference type="NCBI Taxonomy" id="482957"/>
    <lineage>
        <taxon>Bacteria</taxon>
        <taxon>Pseudomonadati</taxon>
        <taxon>Pseudomonadota</taxon>
        <taxon>Betaproteobacteria</taxon>
        <taxon>Burkholderiales</taxon>
        <taxon>Burkholderiaceae</taxon>
        <taxon>Burkholderia</taxon>
        <taxon>Burkholderia cepacia complex</taxon>
    </lineage>
</organism>
<dbReference type="EMBL" id="CP000151">
    <property type="protein sequence ID" value="ABB08697.1"/>
    <property type="molecule type" value="Genomic_DNA"/>
</dbReference>
<dbReference type="RefSeq" id="WP_011352253.1">
    <property type="nucleotide sequence ID" value="NZ_WNDV01000021.1"/>
</dbReference>
<dbReference type="SMR" id="Q39FR9"/>
<dbReference type="GeneID" id="45094979"/>
<dbReference type="KEGG" id="bur:Bcep18194_A5103"/>
<dbReference type="PATRIC" id="fig|482957.22.peg.2040"/>
<dbReference type="HOGENOM" id="CLU_025113_0_1_4"/>
<dbReference type="UniPathway" id="UPA00031">
    <property type="reaction ID" value="UER00006"/>
</dbReference>
<dbReference type="Proteomes" id="UP000002705">
    <property type="component" value="Chromosome 1"/>
</dbReference>
<dbReference type="GO" id="GO:0005737">
    <property type="term" value="C:cytoplasm"/>
    <property type="evidence" value="ECO:0007669"/>
    <property type="project" value="UniProtKB-SubCell"/>
</dbReference>
<dbReference type="GO" id="GO:0004821">
    <property type="term" value="F:histidine-tRNA ligase activity"/>
    <property type="evidence" value="ECO:0007669"/>
    <property type="project" value="TreeGrafter"/>
</dbReference>
<dbReference type="GO" id="GO:0006427">
    <property type="term" value="P:histidyl-tRNA aminoacylation"/>
    <property type="evidence" value="ECO:0007669"/>
    <property type="project" value="TreeGrafter"/>
</dbReference>
<dbReference type="GO" id="GO:0000105">
    <property type="term" value="P:L-histidine biosynthetic process"/>
    <property type="evidence" value="ECO:0007669"/>
    <property type="project" value="UniProtKB-UniRule"/>
</dbReference>
<dbReference type="CDD" id="cd00773">
    <property type="entry name" value="HisRS-like_core"/>
    <property type="match status" value="1"/>
</dbReference>
<dbReference type="Gene3D" id="3.30.930.10">
    <property type="entry name" value="Bira Bifunctional Protein, Domain 2"/>
    <property type="match status" value="1"/>
</dbReference>
<dbReference type="HAMAP" id="MF_00125">
    <property type="entry name" value="HisZ"/>
    <property type="match status" value="1"/>
</dbReference>
<dbReference type="InterPro" id="IPR045864">
    <property type="entry name" value="aa-tRNA-synth_II/BPL/LPL"/>
</dbReference>
<dbReference type="InterPro" id="IPR041715">
    <property type="entry name" value="HisRS-like_core"/>
</dbReference>
<dbReference type="InterPro" id="IPR004516">
    <property type="entry name" value="HisRS/HisZ"/>
</dbReference>
<dbReference type="InterPro" id="IPR004517">
    <property type="entry name" value="HisZ"/>
</dbReference>
<dbReference type="NCBIfam" id="TIGR00443">
    <property type="entry name" value="hisZ_biosyn_reg"/>
    <property type="match status" value="1"/>
</dbReference>
<dbReference type="NCBIfam" id="NF008935">
    <property type="entry name" value="PRK12292.1-1"/>
    <property type="match status" value="1"/>
</dbReference>
<dbReference type="NCBIfam" id="NF009086">
    <property type="entry name" value="PRK12421.1"/>
    <property type="match status" value="1"/>
</dbReference>
<dbReference type="PANTHER" id="PTHR43707:SF1">
    <property type="entry name" value="HISTIDINE--TRNA LIGASE, MITOCHONDRIAL-RELATED"/>
    <property type="match status" value="1"/>
</dbReference>
<dbReference type="PANTHER" id="PTHR43707">
    <property type="entry name" value="HISTIDYL-TRNA SYNTHETASE"/>
    <property type="match status" value="1"/>
</dbReference>
<dbReference type="Pfam" id="PF13393">
    <property type="entry name" value="tRNA-synt_His"/>
    <property type="match status" value="1"/>
</dbReference>
<dbReference type="PIRSF" id="PIRSF001549">
    <property type="entry name" value="His-tRNA_synth"/>
    <property type="match status" value="1"/>
</dbReference>
<dbReference type="SUPFAM" id="SSF55681">
    <property type="entry name" value="Class II aaRS and biotin synthetases"/>
    <property type="match status" value="1"/>
</dbReference>